<feature type="chain" id="PRO_1000060365" description="tRNA uridine(34) hydroxylase">
    <location>
        <begin position="1"/>
        <end position="350"/>
    </location>
</feature>
<feature type="domain" description="Rhodanese" evidence="2">
    <location>
        <begin position="146"/>
        <end position="240"/>
    </location>
</feature>
<feature type="active site" description="Cysteine persulfide intermediate" evidence="2">
    <location>
        <position position="200"/>
    </location>
</feature>
<organism>
    <name type="scientific">Escherichia coli O139:H28 (strain E24377A / ETEC)</name>
    <dbReference type="NCBI Taxonomy" id="331111"/>
    <lineage>
        <taxon>Bacteria</taxon>
        <taxon>Pseudomonadati</taxon>
        <taxon>Pseudomonadota</taxon>
        <taxon>Gammaproteobacteria</taxon>
        <taxon>Enterobacterales</taxon>
        <taxon>Enterobacteriaceae</taxon>
        <taxon>Escherichia</taxon>
    </lineage>
</organism>
<proteinExistence type="inferred from homology"/>
<name>TRHO_ECO24</name>
<gene>
    <name evidence="2" type="primary">trhO</name>
    <name type="synonym">yceA</name>
    <name type="ordered locus">EcE24377A_1177</name>
</gene>
<accession>A7ZKF9</accession>
<evidence type="ECO:0000250" key="1">
    <source>
        <dbReference type="UniProtKB" id="P24188"/>
    </source>
</evidence>
<evidence type="ECO:0000255" key="2">
    <source>
        <dbReference type="HAMAP-Rule" id="MF_00469"/>
    </source>
</evidence>
<dbReference type="EC" id="1.14.-.-" evidence="2"/>
<dbReference type="EMBL" id="CP000800">
    <property type="protein sequence ID" value="ABV20389.1"/>
    <property type="molecule type" value="Genomic_DNA"/>
</dbReference>
<dbReference type="RefSeq" id="WP_001144616.1">
    <property type="nucleotide sequence ID" value="NC_009801.1"/>
</dbReference>
<dbReference type="SMR" id="A7ZKF9"/>
<dbReference type="KEGG" id="ecw:EcE24377A_1177"/>
<dbReference type="HOGENOM" id="CLU_038878_1_1_6"/>
<dbReference type="Proteomes" id="UP000001122">
    <property type="component" value="Chromosome"/>
</dbReference>
<dbReference type="GO" id="GO:0016705">
    <property type="term" value="F:oxidoreductase activity, acting on paired donors, with incorporation or reduction of molecular oxygen"/>
    <property type="evidence" value="ECO:0007669"/>
    <property type="project" value="UniProtKB-UniRule"/>
</dbReference>
<dbReference type="GO" id="GO:0006400">
    <property type="term" value="P:tRNA modification"/>
    <property type="evidence" value="ECO:0007669"/>
    <property type="project" value="UniProtKB-UniRule"/>
</dbReference>
<dbReference type="CDD" id="cd01518">
    <property type="entry name" value="RHOD_YceA"/>
    <property type="match status" value="1"/>
</dbReference>
<dbReference type="Gene3D" id="3.30.70.100">
    <property type="match status" value="1"/>
</dbReference>
<dbReference type="Gene3D" id="3.40.250.10">
    <property type="entry name" value="Rhodanese-like domain"/>
    <property type="match status" value="1"/>
</dbReference>
<dbReference type="HAMAP" id="MF_00469">
    <property type="entry name" value="TrhO"/>
    <property type="match status" value="1"/>
</dbReference>
<dbReference type="InterPro" id="IPR001763">
    <property type="entry name" value="Rhodanese-like_dom"/>
</dbReference>
<dbReference type="InterPro" id="IPR036873">
    <property type="entry name" value="Rhodanese-like_dom_sf"/>
</dbReference>
<dbReference type="InterPro" id="IPR022111">
    <property type="entry name" value="Rhodanese_C"/>
</dbReference>
<dbReference type="InterPro" id="IPR020936">
    <property type="entry name" value="TrhO"/>
</dbReference>
<dbReference type="InterPro" id="IPR040503">
    <property type="entry name" value="TRHO_N"/>
</dbReference>
<dbReference type="NCBIfam" id="NF001133">
    <property type="entry name" value="PRK00142.1-1"/>
    <property type="match status" value="1"/>
</dbReference>
<dbReference type="PANTHER" id="PTHR43846:SF1">
    <property type="entry name" value="TRNA URIDINE(34) HYDROXYLASE"/>
    <property type="match status" value="1"/>
</dbReference>
<dbReference type="PANTHER" id="PTHR43846">
    <property type="entry name" value="UPF0176 PROTEIN YCEA"/>
    <property type="match status" value="1"/>
</dbReference>
<dbReference type="Pfam" id="PF00581">
    <property type="entry name" value="Rhodanese"/>
    <property type="match status" value="1"/>
</dbReference>
<dbReference type="Pfam" id="PF12368">
    <property type="entry name" value="Rhodanese_C"/>
    <property type="match status" value="1"/>
</dbReference>
<dbReference type="Pfam" id="PF17773">
    <property type="entry name" value="UPF0176_N"/>
    <property type="match status" value="1"/>
</dbReference>
<dbReference type="SMART" id="SM00450">
    <property type="entry name" value="RHOD"/>
    <property type="match status" value="1"/>
</dbReference>
<dbReference type="SUPFAM" id="SSF52821">
    <property type="entry name" value="Rhodanese/Cell cycle control phosphatase"/>
    <property type="match status" value="1"/>
</dbReference>
<dbReference type="PROSITE" id="PS50206">
    <property type="entry name" value="RHODANESE_3"/>
    <property type="match status" value="1"/>
</dbReference>
<comment type="function">
    <text evidence="1">Catalyzes oxygen-dependent 5-hydroxyuridine (ho5U) modification at position 34 in tRNAs, the first step in 5-carboxymethoxyuridine (cmo5U) biosynthesis. May be part of an alternate pathway, which is able to bypass cmo5U biogenesis in a subset of tRNAs under aerobic conditions.</text>
</comment>
<comment type="catalytic activity">
    <reaction evidence="2">
        <text>uridine(34) in tRNA + AH2 + O2 = 5-hydroxyuridine(34) in tRNA + A + H2O</text>
        <dbReference type="Rhea" id="RHEA:64224"/>
        <dbReference type="Rhea" id="RHEA-COMP:11727"/>
        <dbReference type="Rhea" id="RHEA-COMP:13381"/>
        <dbReference type="ChEBI" id="CHEBI:13193"/>
        <dbReference type="ChEBI" id="CHEBI:15377"/>
        <dbReference type="ChEBI" id="CHEBI:15379"/>
        <dbReference type="ChEBI" id="CHEBI:17499"/>
        <dbReference type="ChEBI" id="CHEBI:65315"/>
        <dbReference type="ChEBI" id="CHEBI:136877"/>
    </reaction>
</comment>
<comment type="similarity">
    <text evidence="2">Belongs to the TrhO family.</text>
</comment>
<sequence>MPVLHNRISNDALKAKMLAESEPRTTISFYKYFHIADPKATRDALYQLFTALNVFGRVYLAHEGINAQISVPASNVETFRAQLYAFDPALEGLRLNIALDDDGKSFWVLRMKVRDRIVADGIDDPHFDASNVGEYLQAAEVNAMLDDPDALFIDMRNHYEYEVGHFENALEIPADTFREQLPKAVEMMQAHKDKKIVMYCTGGIRCEKASAWMKHNGFNKVWHIEGGIIEYARKAREQGLPVRFIGKNFVFDERMGERISDEIIAHCHQCGAPCDSHTNCKNDGCHLLFIQCPVCAEKYKGCCSEICCEESALPPEEQRRRRAGRENGNKIFNKSRGRLNTTLGIPDPTE</sequence>
<reference key="1">
    <citation type="journal article" date="2008" name="J. Bacteriol.">
        <title>The pangenome structure of Escherichia coli: comparative genomic analysis of E. coli commensal and pathogenic isolates.</title>
        <authorList>
            <person name="Rasko D.A."/>
            <person name="Rosovitz M.J."/>
            <person name="Myers G.S.A."/>
            <person name="Mongodin E.F."/>
            <person name="Fricke W.F."/>
            <person name="Gajer P."/>
            <person name="Crabtree J."/>
            <person name="Sebaihia M."/>
            <person name="Thomson N.R."/>
            <person name="Chaudhuri R."/>
            <person name="Henderson I.R."/>
            <person name="Sperandio V."/>
            <person name="Ravel J."/>
        </authorList>
    </citation>
    <scope>NUCLEOTIDE SEQUENCE [LARGE SCALE GENOMIC DNA]</scope>
    <source>
        <strain>E24377A / ETEC</strain>
    </source>
</reference>
<keyword id="KW-0560">Oxidoreductase</keyword>
<keyword id="KW-1185">Reference proteome</keyword>
<keyword id="KW-0819">tRNA processing</keyword>
<protein>
    <recommendedName>
        <fullName evidence="2">tRNA uridine(34) hydroxylase</fullName>
        <ecNumber evidence="2">1.14.-.-</ecNumber>
    </recommendedName>
    <alternativeName>
        <fullName evidence="2">tRNA hydroxylation protein O</fullName>
    </alternativeName>
</protein>